<dbReference type="EC" id="1.6.2.-" evidence="3"/>
<dbReference type="EMBL" id="AFWY03000000">
    <property type="status" value="NOT_ANNOTATED_CDS"/>
    <property type="molecule type" value="Genomic_DNA"/>
</dbReference>
<dbReference type="RefSeq" id="WP_020419854.1">
    <property type="nucleotide sequence ID" value="NZ_AFWY03000022.1"/>
</dbReference>
<dbReference type="PDB" id="5OGX">
    <property type="method" value="X-ray"/>
    <property type="resolution" value="1.72 A"/>
    <property type="chains" value="A=1-334"/>
</dbReference>
<dbReference type="PDBsum" id="5OGX"/>
<dbReference type="SMR" id="P0DPQ8"/>
<dbReference type="SABIO-RK" id="P0DPQ8"/>
<dbReference type="GO" id="GO:0051537">
    <property type="term" value="F:2 iron, 2 sulfur cluster binding"/>
    <property type="evidence" value="ECO:0007669"/>
    <property type="project" value="UniProtKB-KW"/>
</dbReference>
<dbReference type="GO" id="GO:0046872">
    <property type="term" value="F:metal ion binding"/>
    <property type="evidence" value="ECO:0007669"/>
    <property type="project" value="UniProtKB-KW"/>
</dbReference>
<dbReference type="GO" id="GO:0016491">
    <property type="term" value="F:oxidoreductase activity"/>
    <property type="evidence" value="ECO:0007669"/>
    <property type="project" value="UniProtKB-KW"/>
</dbReference>
<dbReference type="GO" id="GO:0009056">
    <property type="term" value="P:catabolic process"/>
    <property type="evidence" value="ECO:0007669"/>
    <property type="project" value="UniProtKB-KW"/>
</dbReference>
<dbReference type="CDD" id="cd00207">
    <property type="entry name" value="fer2"/>
    <property type="match status" value="1"/>
</dbReference>
<dbReference type="CDD" id="cd06187">
    <property type="entry name" value="O2ase_reductase_like"/>
    <property type="match status" value="1"/>
</dbReference>
<dbReference type="Gene3D" id="3.10.20.30">
    <property type="match status" value="1"/>
</dbReference>
<dbReference type="Gene3D" id="3.40.50.80">
    <property type="entry name" value="Nucleotide-binding domain of ferredoxin-NADP reductase (FNR) module"/>
    <property type="match status" value="1"/>
</dbReference>
<dbReference type="Gene3D" id="2.40.30.10">
    <property type="entry name" value="Translation factors"/>
    <property type="match status" value="1"/>
</dbReference>
<dbReference type="InterPro" id="IPR036010">
    <property type="entry name" value="2Fe-2S_ferredoxin-like_sf"/>
</dbReference>
<dbReference type="InterPro" id="IPR001041">
    <property type="entry name" value="2Fe-2S_ferredoxin-type"/>
</dbReference>
<dbReference type="InterPro" id="IPR006058">
    <property type="entry name" value="2Fe2S_fd_BS"/>
</dbReference>
<dbReference type="InterPro" id="IPR012675">
    <property type="entry name" value="Beta-grasp_dom_sf"/>
</dbReference>
<dbReference type="InterPro" id="IPR008333">
    <property type="entry name" value="Cbr1-like_FAD-bd_dom"/>
</dbReference>
<dbReference type="InterPro" id="IPR017927">
    <property type="entry name" value="FAD-bd_FR_type"/>
</dbReference>
<dbReference type="InterPro" id="IPR001709">
    <property type="entry name" value="Flavoprot_Pyr_Nucl_cyt_Rdtase"/>
</dbReference>
<dbReference type="InterPro" id="IPR039261">
    <property type="entry name" value="FNR_nucleotide-bd"/>
</dbReference>
<dbReference type="InterPro" id="IPR050415">
    <property type="entry name" value="MRET"/>
</dbReference>
<dbReference type="InterPro" id="IPR001433">
    <property type="entry name" value="OxRdtase_FAD/NAD-bd"/>
</dbReference>
<dbReference type="InterPro" id="IPR017938">
    <property type="entry name" value="Riboflavin_synthase-like_b-brl"/>
</dbReference>
<dbReference type="PANTHER" id="PTHR47354">
    <property type="entry name" value="NADH OXIDOREDUCTASE HCR"/>
    <property type="match status" value="1"/>
</dbReference>
<dbReference type="PANTHER" id="PTHR47354:SF5">
    <property type="entry name" value="PROTEIN RFBI"/>
    <property type="match status" value="1"/>
</dbReference>
<dbReference type="Pfam" id="PF00970">
    <property type="entry name" value="FAD_binding_6"/>
    <property type="match status" value="1"/>
</dbReference>
<dbReference type="Pfam" id="PF00111">
    <property type="entry name" value="Fer2"/>
    <property type="match status" value="1"/>
</dbReference>
<dbReference type="Pfam" id="PF00175">
    <property type="entry name" value="NAD_binding_1"/>
    <property type="match status" value="1"/>
</dbReference>
<dbReference type="PRINTS" id="PR00371">
    <property type="entry name" value="FPNCR"/>
</dbReference>
<dbReference type="PRINTS" id="PR00410">
    <property type="entry name" value="PHEHYDRXLASE"/>
</dbReference>
<dbReference type="SUPFAM" id="SSF54292">
    <property type="entry name" value="2Fe-2S ferredoxin-like"/>
    <property type="match status" value="1"/>
</dbReference>
<dbReference type="SUPFAM" id="SSF52343">
    <property type="entry name" value="Ferredoxin reductase-like, C-terminal NADP-linked domain"/>
    <property type="match status" value="1"/>
</dbReference>
<dbReference type="SUPFAM" id="SSF63380">
    <property type="entry name" value="Riboflavin synthase domain-like"/>
    <property type="match status" value="1"/>
</dbReference>
<dbReference type="PROSITE" id="PS00197">
    <property type="entry name" value="2FE2S_FER_1"/>
    <property type="match status" value="1"/>
</dbReference>
<dbReference type="PROSITE" id="PS51085">
    <property type="entry name" value="2FE2S_FER_2"/>
    <property type="match status" value="1"/>
</dbReference>
<dbReference type="PROSITE" id="PS51384">
    <property type="entry name" value="FAD_FR"/>
    <property type="match status" value="1"/>
</dbReference>
<evidence type="ECO:0000255" key="1">
    <source>
        <dbReference type="PROSITE-ProRule" id="PRU00465"/>
    </source>
</evidence>
<evidence type="ECO:0000255" key="2">
    <source>
        <dbReference type="PROSITE-ProRule" id="PRU00716"/>
    </source>
</evidence>
<evidence type="ECO:0000269" key="3">
    <source>
    </source>
</evidence>
<evidence type="ECO:0000303" key="4">
    <source>
    </source>
</evidence>
<evidence type="ECO:0000305" key="5">
    <source>
    </source>
</evidence>
<feature type="chain" id="PRO_0000445480" description="Aromatic O-demethylase, reductase subunit">
    <location>
        <begin position="1"/>
        <end position="334"/>
    </location>
</feature>
<feature type="domain" description="2Fe-2S ferredoxin-type" evidence="1">
    <location>
        <begin position="1"/>
        <end position="91"/>
    </location>
</feature>
<feature type="domain" description="FAD-binding FR-type" evidence="2">
    <location>
        <begin position="98"/>
        <end position="198"/>
    </location>
</feature>
<feature type="binding site" evidence="3">
    <location>
        <position position="35"/>
    </location>
    <ligand>
        <name>[2Fe-2S] cluster</name>
        <dbReference type="ChEBI" id="CHEBI:190135"/>
    </ligand>
</feature>
<feature type="binding site" evidence="3">
    <location>
        <position position="40"/>
    </location>
    <ligand>
        <name>[2Fe-2S] cluster</name>
        <dbReference type="ChEBI" id="CHEBI:190135"/>
    </ligand>
</feature>
<feature type="binding site" evidence="3">
    <location>
        <position position="43"/>
    </location>
    <ligand>
        <name>[2Fe-2S] cluster</name>
        <dbReference type="ChEBI" id="CHEBI:190135"/>
    </ligand>
</feature>
<feature type="binding site" evidence="3">
    <location>
        <position position="75"/>
    </location>
    <ligand>
        <name>[2Fe-2S] cluster</name>
        <dbReference type="ChEBI" id="CHEBI:190135"/>
    </ligand>
</feature>
<feature type="binding site" evidence="3">
    <location>
        <begin position="145"/>
        <end position="148"/>
    </location>
    <ligand>
        <name>FAD</name>
        <dbReference type="ChEBI" id="CHEBI:57692"/>
    </ligand>
</feature>
<feature type="binding site" evidence="3">
    <location>
        <begin position="162"/>
        <end position="164"/>
    </location>
    <ligand>
        <name>FAD</name>
        <dbReference type="ChEBI" id="CHEBI:57692"/>
    </ligand>
</feature>
<feature type="binding site" evidence="3">
    <location>
        <begin position="170"/>
        <end position="172"/>
    </location>
    <ligand>
        <name>FAD</name>
        <dbReference type="ChEBI" id="CHEBI:57692"/>
    </ligand>
</feature>
<feature type="binding site" evidence="3">
    <location>
        <position position="215"/>
    </location>
    <ligand>
        <name>FAD</name>
        <dbReference type="ChEBI" id="CHEBI:57692"/>
    </ligand>
</feature>
<feature type="binding site" evidence="3">
    <location>
        <position position="330"/>
    </location>
    <ligand>
        <name>FAD</name>
        <dbReference type="ChEBI" id="CHEBI:57692"/>
    </ligand>
</feature>
<feature type="binding site" evidence="3">
    <location>
        <position position="334"/>
    </location>
    <ligand>
        <name>FAD</name>
        <dbReference type="ChEBI" id="CHEBI:57692"/>
    </ligand>
</feature>
<reference key="1">
    <citation type="journal article" date="2012" name="J. Bacteriol.">
        <title>Genome sequence of Amycolatopsis sp. strain ATCC 39116, a plant biomass-degrading actinomycete.</title>
        <authorList>
            <person name="Davis J.R."/>
            <person name="Goodwin L.A."/>
            <person name="Woyke T."/>
            <person name="Teshima H."/>
            <person name="Bruce D."/>
            <person name="Detter C."/>
            <person name="Tapia R."/>
            <person name="Han S."/>
            <person name="Han J."/>
            <person name="Pitluck S."/>
            <person name="Nolan M."/>
            <person name="Mikhailova N."/>
            <person name="Land M.L."/>
            <person name="Sello J.K."/>
        </authorList>
    </citation>
    <scope>NUCLEOTIDE SEQUENCE [GENOMIC DNA]</scope>
    <source>
        <strain>ATCC 39116 / 75iv2</strain>
    </source>
</reference>
<reference key="2">
    <citation type="journal article" date="2018" name="Nat. Commun.">
        <title>A promiscuous cytochrome P450 aromatic O-demethylase for lignin bioconversion.</title>
        <authorList>
            <person name="Mallinson S.J.B."/>
            <person name="Machovina M.M."/>
            <person name="Silveira R.L."/>
            <person name="Garcia-Borras M."/>
            <person name="Gallup N."/>
            <person name="Johnson C.W."/>
            <person name="Allen M.D."/>
            <person name="Skaf M.S."/>
            <person name="Crowley M.F."/>
            <person name="Neidle E.L."/>
            <person name="Houk K.N."/>
            <person name="Beckham G.T."/>
            <person name="DuBois J.L."/>
            <person name="McGeehan J.E."/>
        </authorList>
    </citation>
    <scope>X-RAY CRYSTALLOGRAPHY (1.72 ANGSTROMS) IN COMPLEX WITH FAD AND 2FE-2S CLUSTER</scope>
    <scope>FUNCTION</scope>
    <scope>CATALYTIC ACTIVITY</scope>
    <scope>COFACTOR</scope>
    <scope>BIOPHYSICOCHEMICAL PROPERTIES</scope>
    <scope>SUBUNIT</scope>
    <scope>DOMAIN</scope>
    <source>
        <strain>ATCC 39116 / 75iv2</strain>
    </source>
</reference>
<protein>
    <recommendedName>
        <fullName evidence="5">Aromatic O-demethylase, reductase subunit</fullName>
        <ecNumber evidence="3">1.6.2.-</ecNumber>
    </recommendedName>
    <alternativeName>
        <fullName evidence="5">NADH--hemoprotein reductase</fullName>
    </alternativeName>
</protein>
<name>GCOB_AMYS7</name>
<sequence>MTFAVSVGGRRVDCEPGQTLLEAFLRGGVWMPNSCNQGTCGTCKLQVLSGEVDHGGAPEDTLSAEERASGLALACQARPLADTEVRSTADAGRVTHPLRDLTATVLEVADIARDTRRVLLGLAEPLAFEAGQYVELVVPGSGARRQYSLANTADEDKVLELHVRRVPGGVATDGWLFDGLAAGDRVEATGPLGDFHLPPPDEDDGGPMVLIGGGTGLAPLVGIARTALARHPSREVLLYHGVRGAADLYDLGRFAEIAEEHPGFRFVPVLSDEPDPAYRGGFPTDAFVEDVPSGRGWSGWLCGPPAMVEAGVKAFKRRRMSPRRIHREKFTPAS</sequence>
<keyword id="KW-0001">2Fe-2S</keyword>
<keyword id="KW-0002">3D-structure</keyword>
<keyword id="KW-0058">Aromatic hydrocarbons catabolism</keyword>
<keyword id="KW-0249">Electron transport</keyword>
<keyword id="KW-0274">FAD</keyword>
<keyword id="KW-0285">Flavoprotein</keyword>
<keyword id="KW-0408">Iron</keyword>
<keyword id="KW-0411">Iron-sulfur</keyword>
<keyword id="KW-0479">Metal-binding</keyword>
<keyword id="KW-0520">NAD</keyword>
<keyword id="KW-0560">Oxidoreductase</keyword>
<keyword id="KW-0813">Transport</keyword>
<comment type="function">
    <text evidence="3">Part of a two-component P450 system that efficiently O-demethylates diverse aromatic substrates such as guaiacol and a wide variety of lignin-derived monomers. Is likely involved in lignin degradation, allowing Amycolatopsis sp. ATCC 39116 to catabolize plant biomass. GcoB transfers electrons from NADH to the cytochrome P450 subunit GcoA. Highly prefers NADH over NADPH as the electron donor.</text>
</comment>
<comment type="catalytic activity">
    <reaction evidence="3">
        <text>2 oxidized [cytochrome P450] + NADH = 2 reduced [cytochrome P450] + NAD(+) + H(+)</text>
        <dbReference type="Rhea" id="RHEA:57420"/>
        <dbReference type="Rhea" id="RHEA-COMP:14627"/>
        <dbReference type="Rhea" id="RHEA-COMP:14628"/>
        <dbReference type="ChEBI" id="CHEBI:15378"/>
        <dbReference type="ChEBI" id="CHEBI:55376"/>
        <dbReference type="ChEBI" id="CHEBI:57540"/>
        <dbReference type="ChEBI" id="CHEBI:57945"/>
        <dbReference type="ChEBI" id="CHEBI:60344"/>
    </reaction>
</comment>
<comment type="cofactor">
    <cofactor evidence="3">
        <name>FAD</name>
        <dbReference type="ChEBI" id="CHEBI:57692"/>
    </cofactor>
    <text evidence="3">Binds 1 FAD per subunit.</text>
</comment>
<comment type="cofactor">
    <cofactor evidence="3">
        <name>[2Fe-2S] cluster</name>
        <dbReference type="ChEBI" id="CHEBI:190135"/>
    </cofactor>
    <text evidence="3">Binds 1 [2Fe-2S] cluster per subunit.</text>
</comment>
<comment type="biophysicochemical properties">
    <kinetics>
        <KM evidence="3">16 uM for NADH</KM>
        <text evidence="3">kcat is 44 sec(-1) for NADH-mediated reduction of cytochrome c.</text>
    </kinetics>
</comment>
<comment type="pathway">
    <text evidence="5">Aromatic compound metabolism.</text>
</comment>
<comment type="subunit">
    <text evidence="3">Monomer. Forms a heterodimer with GcoA.</text>
</comment>
<comment type="domain">
    <text evidence="3">GcoB has an unusual three-domain structure, with an N-terminal 2Fe-2S domain and a C-terminal region that consists of an FAD-binding domain followed by an NADH-binding domain.</text>
</comment>
<accession>P0DPQ8</accession>
<gene>
    <name evidence="4" type="primary">gcoB</name>
</gene>
<proteinExistence type="evidence at protein level"/>
<organism>
    <name type="scientific">Amycolatopsis sp. (strain ATCC 39116 / 75iv2)</name>
    <dbReference type="NCBI Taxonomy" id="385957"/>
    <lineage>
        <taxon>Bacteria</taxon>
        <taxon>Bacillati</taxon>
        <taxon>Actinomycetota</taxon>
        <taxon>Actinomycetes</taxon>
        <taxon>Pseudonocardiales</taxon>
        <taxon>Pseudonocardiaceae</taxon>
        <taxon>Amycolatopsis</taxon>
    </lineage>
</organism>